<protein>
    <recommendedName>
        <fullName>Beta-galactosidase</fullName>
        <ecNumber>3.2.1.23</ecNumber>
    </recommendedName>
    <alternativeName>
        <fullName>Acid beta-galactosidase</fullName>
        <shortName>Lactase</shortName>
    </alternativeName>
    <alternativeName>
        <fullName>Exo-(1--&gt;4)-beta-D-galactanase</fullName>
    </alternativeName>
    <component>
        <recommendedName>
            <fullName>Beta-galactosidase large subunit</fullName>
        </recommendedName>
    </component>
    <component>
        <recommendedName>
            <fullName>Beta-galactosidase small subunit</fullName>
        </recommendedName>
    </component>
</protein>
<feature type="chain" id="PRO_0000271912" description="Beta-galactosidase large subunit" evidence="3">
    <location>
        <begin position="1"/>
        <end position="28" status="greater than"/>
    </location>
</feature>
<feature type="chain" id="PRO_0000271913" description="Beta-galactosidase small subunit" evidence="3">
    <location>
        <begin position="29"/>
        <end position="38" status="greater than"/>
    </location>
</feature>
<feature type="non-consecutive residues" evidence="4">
    <location>
        <begin position="28"/>
        <end position="29"/>
    </location>
</feature>
<feature type="non-terminal residue" evidence="4">
    <location>
        <position position="38"/>
    </location>
</feature>
<dbReference type="EC" id="3.2.1.23"/>
<dbReference type="BRENDA" id="3.2.1.23">
    <property type="organism ID" value="2687"/>
</dbReference>
<dbReference type="GO" id="GO:0004565">
    <property type="term" value="F:beta-galactosidase activity"/>
    <property type="evidence" value="ECO:0000303"/>
    <property type="project" value="UniProtKB"/>
</dbReference>
<dbReference type="GO" id="GO:0016798">
    <property type="term" value="F:hydrolase activity, acting on glycosyl bonds"/>
    <property type="evidence" value="ECO:0000303"/>
    <property type="project" value="UniProtKB"/>
</dbReference>
<dbReference type="Gene3D" id="3.20.20.80">
    <property type="entry name" value="Glycosidases"/>
    <property type="match status" value="1"/>
</dbReference>
<organism>
    <name type="scientific">Hordeum vulgare</name>
    <name type="common">Barley</name>
    <dbReference type="NCBI Taxonomy" id="4513"/>
    <lineage>
        <taxon>Eukaryota</taxon>
        <taxon>Viridiplantae</taxon>
        <taxon>Streptophyta</taxon>
        <taxon>Embryophyta</taxon>
        <taxon>Tracheophyta</taxon>
        <taxon>Spermatophyta</taxon>
        <taxon>Magnoliopsida</taxon>
        <taxon>Liliopsida</taxon>
        <taxon>Poales</taxon>
        <taxon>Poaceae</taxon>
        <taxon>BOP clade</taxon>
        <taxon>Pooideae</taxon>
        <taxon>Triticodae</taxon>
        <taxon>Triticeae</taxon>
        <taxon>Hordeinae</taxon>
        <taxon>Hordeum</taxon>
    </lineage>
</organism>
<proteinExistence type="evidence at protein level"/>
<keyword id="KW-0903">Direct protein sequencing</keyword>
<keyword id="KW-0325">Glycoprotein</keyword>
<keyword id="KW-0326">Glycosidase</keyword>
<keyword id="KW-0378">Hydrolase</keyword>
<evidence type="ECO:0000250" key="1">
    <source>
        <dbReference type="UniProtKB" id="P48981"/>
    </source>
</evidence>
<evidence type="ECO:0000255" key="2"/>
<evidence type="ECO:0000269" key="3">
    <source>
    </source>
</evidence>
<evidence type="ECO:0000303" key="4">
    <source>
    </source>
</evidence>
<evidence type="ECO:0000305" key="5"/>
<accession>P83252</accession>
<reference evidence="5" key="1">
    <citation type="journal article" date="2001" name="J. Protein Chem.">
        <title>Barley beta-galactosidase: structure, function, heterogeneity, and gene origin.</title>
        <authorList>
            <person name="Triantafillidou D."/>
            <person name="Georgatsos J.G."/>
        </authorList>
    </citation>
    <scope>PROTEIN SEQUENCE</scope>
    <scope>SUBUNIT</scope>
    <scope>GLYCOSYLATION</scope>
    <source>
        <strain evidence="3">cv. Sofia</strain>
        <tissue evidence="3">Seed</tissue>
    </source>
</reference>
<name>BGAL_HORVU</name>
<comment type="function">
    <text evidence="1">Involved in cell wall degradation. Degrades polysaccharides containing beta-(1--&gt;4)-linked galactans, acting as an exo-(1--&gt;4)-beta-D-galactanase (By similarity).</text>
</comment>
<comment type="catalytic activity">
    <reaction evidence="1">
        <text>Hydrolysis of terminal non-reducing beta-D-galactose residues in beta-D-galactosides.</text>
        <dbReference type="EC" id="3.2.1.23"/>
    </reaction>
</comment>
<comment type="subunit">
    <text evidence="3">Heterodimer of a large and a small subunit.</text>
</comment>
<comment type="PTM">
    <text evidence="3">The small subunit is N-glycosylated.</text>
</comment>
<comment type="miscellaneous">
    <text evidence="3">There are three forms of the large subunit which have the same sequence but differ in charge. There are four forms of the small subunit which have the same sequence but differ in charge.</text>
</comment>
<comment type="similarity">
    <text evidence="2">Belongs to the glycosyl hydrolase 35 family.</text>
</comment>
<sequence>TGVTYDHRALVIDGXXXVLVSGSIHYPRAASSWYAVET</sequence>